<sequence>MVMGLGVLLLVFVLGLGLTPPTLAQDNSRYTHFLTQHYDAKPQGRDHRYCESIMRRRGLTSPCKDINTFIHGNKRSIKAICENKNGNPHRENLRISKSSFQVTTCKLHGGSPWPPCQYRATAGFRNVVVACENGLPVHLDQSIFRRP</sequence>
<dbReference type="EC" id="3.1.27.-" evidence="1"/>
<dbReference type="EMBL" id="AF441661">
    <property type="protein sequence ID" value="AAL61643.1"/>
    <property type="molecule type" value="Genomic_DNA"/>
</dbReference>
<dbReference type="EMBL" id="AF441676">
    <property type="protein sequence ID" value="AAL65148.1"/>
    <property type="molecule type" value="Genomic_DNA"/>
</dbReference>
<dbReference type="EMBL" id="AB062039">
    <property type="protein sequence ID" value="BAB55868.1"/>
    <property type="status" value="ALT_INIT"/>
    <property type="molecule type" value="Genomic_DNA"/>
</dbReference>
<dbReference type="EMBL" id="AB062040">
    <property type="protein sequence ID" value="BAB55869.1"/>
    <property type="status" value="ALT_INIT"/>
    <property type="molecule type" value="Genomic_DNA"/>
</dbReference>
<dbReference type="RefSeq" id="NP_001009159.1">
    <property type="nucleotide sequence ID" value="NM_001009159.1"/>
</dbReference>
<dbReference type="RefSeq" id="XP_009425660.1">
    <property type="nucleotide sequence ID" value="XM_009427385.4"/>
</dbReference>
<dbReference type="RefSeq" id="XP_009425661.1">
    <property type="nucleotide sequence ID" value="XM_009427386.5"/>
</dbReference>
<dbReference type="RefSeq" id="XP_009425662.1">
    <property type="nucleotide sequence ID" value="XM_009427387.3"/>
</dbReference>
<dbReference type="SMR" id="Q8WME8"/>
<dbReference type="FunCoup" id="Q8WME8">
    <property type="interactions" value="162"/>
</dbReference>
<dbReference type="STRING" id="9598.ENSPTRP00000066875"/>
<dbReference type="PaxDb" id="9598-ENSPTRP00000054974"/>
<dbReference type="Ensembl" id="ENSPTRT00000081505.1">
    <property type="protein sequence ID" value="ENSPTRP00000066875.1"/>
    <property type="gene ID" value="ENSPTRG00000043768.1"/>
</dbReference>
<dbReference type="GeneID" id="494026"/>
<dbReference type="KEGG" id="ptr:494026"/>
<dbReference type="CTD" id="283"/>
<dbReference type="VGNC" id="VGNC:10303">
    <property type="gene designation" value="ANG"/>
</dbReference>
<dbReference type="eggNOG" id="ENOG502S9Q1">
    <property type="taxonomic scope" value="Eukaryota"/>
</dbReference>
<dbReference type="GeneTree" id="ENSGT00940000162981"/>
<dbReference type="HOGENOM" id="CLU_117006_3_1_1"/>
<dbReference type="InParanoid" id="Q8WME8"/>
<dbReference type="TreeFam" id="TF333393"/>
<dbReference type="Proteomes" id="UP000002277">
    <property type="component" value="Chromosome 14"/>
</dbReference>
<dbReference type="Bgee" id="ENSPTRG00000043768">
    <property type="expression patterns" value="Expressed in liver and 16 other cell types or tissues"/>
</dbReference>
<dbReference type="GO" id="GO:0015629">
    <property type="term" value="C:actin cytoskeleton"/>
    <property type="evidence" value="ECO:0007669"/>
    <property type="project" value="Ensembl"/>
</dbReference>
<dbReference type="GO" id="GO:0032311">
    <property type="term" value="C:angiogenin-PRI complex"/>
    <property type="evidence" value="ECO:0000250"/>
    <property type="project" value="UniProtKB"/>
</dbReference>
<dbReference type="GO" id="GO:0005604">
    <property type="term" value="C:basement membrane"/>
    <property type="evidence" value="ECO:0000250"/>
    <property type="project" value="UniProtKB"/>
</dbReference>
<dbReference type="GO" id="GO:0005694">
    <property type="term" value="C:chromosome"/>
    <property type="evidence" value="ECO:0007669"/>
    <property type="project" value="Ensembl"/>
</dbReference>
<dbReference type="GO" id="GO:0005737">
    <property type="term" value="C:cytoplasm"/>
    <property type="evidence" value="ECO:0000250"/>
    <property type="project" value="UniProtKB"/>
</dbReference>
<dbReference type="GO" id="GO:0010494">
    <property type="term" value="C:cytoplasmic stress granule"/>
    <property type="evidence" value="ECO:0007669"/>
    <property type="project" value="UniProtKB-SubCell"/>
</dbReference>
<dbReference type="GO" id="GO:0030139">
    <property type="term" value="C:endocytic vesicle"/>
    <property type="evidence" value="ECO:0000250"/>
    <property type="project" value="UniProtKB"/>
</dbReference>
<dbReference type="GO" id="GO:0005615">
    <property type="term" value="C:extracellular space"/>
    <property type="evidence" value="ECO:0000250"/>
    <property type="project" value="UniProtKB"/>
</dbReference>
<dbReference type="GO" id="GO:0005730">
    <property type="term" value="C:nucleolus"/>
    <property type="evidence" value="ECO:0000250"/>
    <property type="project" value="UniProtKB"/>
</dbReference>
<dbReference type="GO" id="GO:0005634">
    <property type="term" value="C:nucleus"/>
    <property type="evidence" value="ECO:0000250"/>
    <property type="project" value="UniProtKB"/>
</dbReference>
<dbReference type="GO" id="GO:0003779">
    <property type="term" value="F:actin binding"/>
    <property type="evidence" value="ECO:0000250"/>
    <property type="project" value="UniProtKB"/>
</dbReference>
<dbReference type="GO" id="GO:0005507">
    <property type="term" value="F:copper ion binding"/>
    <property type="evidence" value="ECO:0000250"/>
    <property type="project" value="UniProtKB"/>
</dbReference>
<dbReference type="GO" id="GO:0003677">
    <property type="term" value="F:DNA binding"/>
    <property type="evidence" value="ECO:0007669"/>
    <property type="project" value="UniProtKB-KW"/>
</dbReference>
<dbReference type="GO" id="GO:0004519">
    <property type="term" value="F:endonuclease activity"/>
    <property type="evidence" value="ECO:0007669"/>
    <property type="project" value="UniProtKB-KW"/>
</dbReference>
<dbReference type="GO" id="GO:0008201">
    <property type="term" value="F:heparin binding"/>
    <property type="evidence" value="ECO:0000250"/>
    <property type="project" value="UniProtKB"/>
</dbReference>
<dbReference type="GO" id="GO:0042277">
    <property type="term" value="F:peptide binding"/>
    <property type="evidence" value="ECO:0007669"/>
    <property type="project" value="Ensembl"/>
</dbReference>
<dbReference type="GO" id="GO:0042803">
    <property type="term" value="F:protein homodimerization activity"/>
    <property type="evidence" value="ECO:0000250"/>
    <property type="project" value="UniProtKB"/>
</dbReference>
<dbReference type="GO" id="GO:0048018">
    <property type="term" value="F:receptor ligand activity"/>
    <property type="evidence" value="ECO:0007669"/>
    <property type="project" value="Ensembl"/>
</dbReference>
<dbReference type="GO" id="GO:0043022">
    <property type="term" value="F:ribosome binding"/>
    <property type="evidence" value="ECO:0007669"/>
    <property type="project" value="Ensembl"/>
</dbReference>
<dbReference type="GO" id="GO:0004540">
    <property type="term" value="F:RNA nuclease activity"/>
    <property type="evidence" value="ECO:0000250"/>
    <property type="project" value="UniProtKB"/>
</dbReference>
<dbReference type="GO" id="GO:0005102">
    <property type="term" value="F:signaling receptor binding"/>
    <property type="evidence" value="ECO:0000250"/>
    <property type="project" value="UniProtKB"/>
</dbReference>
<dbReference type="GO" id="GO:0004549">
    <property type="term" value="F:tRNA-specific ribonuclease activity"/>
    <property type="evidence" value="ECO:0000250"/>
    <property type="project" value="UniProtKB"/>
</dbReference>
<dbReference type="GO" id="GO:0030041">
    <property type="term" value="P:actin filament polymerization"/>
    <property type="evidence" value="ECO:0000250"/>
    <property type="project" value="UniProtKB"/>
</dbReference>
<dbReference type="GO" id="GO:0001525">
    <property type="term" value="P:angiogenesis"/>
    <property type="evidence" value="ECO:0000250"/>
    <property type="project" value="UniProtKB"/>
</dbReference>
<dbReference type="GO" id="GO:0019731">
    <property type="term" value="P:antibacterial humoral response"/>
    <property type="evidence" value="ECO:0000318"/>
    <property type="project" value="GO_Central"/>
</dbReference>
<dbReference type="GO" id="GO:0061844">
    <property type="term" value="P:antimicrobial humoral immune response mediated by antimicrobial peptide"/>
    <property type="evidence" value="ECO:0000318"/>
    <property type="project" value="GO_Central"/>
</dbReference>
<dbReference type="GO" id="GO:0016477">
    <property type="term" value="P:cell migration"/>
    <property type="evidence" value="ECO:0007669"/>
    <property type="project" value="Ensembl"/>
</dbReference>
<dbReference type="GO" id="GO:0050830">
    <property type="term" value="P:defense response to Gram-positive bacterium"/>
    <property type="evidence" value="ECO:0000318"/>
    <property type="project" value="GO_Central"/>
</dbReference>
<dbReference type="GO" id="GO:0071425">
    <property type="term" value="P:hematopoietic stem cell proliferation"/>
    <property type="evidence" value="ECO:0000250"/>
    <property type="project" value="UniProtKB"/>
</dbReference>
<dbReference type="GO" id="GO:0045087">
    <property type="term" value="P:innate immune response"/>
    <property type="evidence" value="ECO:0000318"/>
    <property type="project" value="GO_Central"/>
</dbReference>
<dbReference type="GO" id="GO:0043066">
    <property type="term" value="P:negative regulation of apoptotic process"/>
    <property type="evidence" value="ECO:0000250"/>
    <property type="project" value="UniProtKB"/>
</dbReference>
<dbReference type="GO" id="GO:0048662">
    <property type="term" value="P:negative regulation of smooth muscle cell proliferation"/>
    <property type="evidence" value="ECO:0000250"/>
    <property type="project" value="UniProtKB"/>
</dbReference>
<dbReference type="GO" id="GO:0032055">
    <property type="term" value="P:negative regulation of translation in response to stress"/>
    <property type="evidence" value="ECO:0000250"/>
    <property type="project" value="UniProtKB"/>
</dbReference>
<dbReference type="GO" id="GO:0001938">
    <property type="term" value="P:positive regulation of endothelial cell proliferation"/>
    <property type="evidence" value="ECO:0000250"/>
    <property type="project" value="UniProtKB"/>
</dbReference>
<dbReference type="GO" id="GO:0042327">
    <property type="term" value="P:positive regulation of phosphorylation"/>
    <property type="evidence" value="ECO:0007669"/>
    <property type="project" value="Ensembl"/>
</dbReference>
<dbReference type="GO" id="GO:0050714">
    <property type="term" value="P:positive regulation of protein secretion"/>
    <property type="evidence" value="ECO:0000250"/>
    <property type="project" value="UniProtKB"/>
</dbReference>
<dbReference type="GO" id="GO:0009725">
    <property type="term" value="P:response to hormone"/>
    <property type="evidence" value="ECO:0007669"/>
    <property type="project" value="Ensembl"/>
</dbReference>
<dbReference type="GO" id="GO:0001666">
    <property type="term" value="P:response to hypoxia"/>
    <property type="evidence" value="ECO:0000250"/>
    <property type="project" value="UniProtKB"/>
</dbReference>
<dbReference type="GO" id="GO:0009303">
    <property type="term" value="P:rRNA transcription"/>
    <property type="evidence" value="ECO:0000250"/>
    <property type="project" value="UniProtKB"/>
</dbReference>
<dbReference type="GO" id="GO:0023052">
    <property type="term" value="P:signaling"/>
    <property type="evidence" value="ECO:0000250"/>
    <property type="project" value="UniProtKB"/>
</dbReference>
<dbReference type="GO" id="GO:0034063">
    <property type="term" value="P:stress granule assembly"/>
    <property type="evidence" value="ECO:0000250"/>
    <property type="project" value="UniProtKB"/>
</dbReference>
<dbReference type="CDD" id="cd06265">
    <property type="entry name" value="RNase_A_canonical"/>
    <property type="match status" value="1"/>
</dbReference>
<dbReference type="FunFam" id="3.10.130.10:FF:000001">
    <property type="entry name" value="Ribonuclease pancreatic"/>
    <property type="match status" value="1"/>
</dbReference>
<dbReference type="Gene3D" id="3.10.130.10">
    <property type="entry name" value="Ribonuclease A-like domain"/>
    <property type="match status" value="1"/>
</dbReference>
<dbReference type="InterPro" id="IPR001427">
    <property type="entry name" value="RNaseA"/>
</dbReference>
<dbReference type="InterPro" id="IPR036816">
    <property type="entry name" value="RNaseA-like_dom_sf"/>
</dbReference>
<dbReference type="InterPro" id="IPR023411">
    <property type="entry name" value="RNaseA_AS"/>
</dbReference>
<dbReference type="InterPro" id="IPR023412">
    <property type="entry name" value="RNaseA_domain"/>
</dbReference>
<dbReference type="PANTHER" id="PTHR11437:SF60">
    <property type="entry name" value="ANGIOGENIN"/>
    <property type="match status" value="1"/>
</dbReference>
<dbReference type="PANTHER" id="PTHR11437">
    <property type="entry name" value="RIBONUCLEASE"/>
    <property type="match status" value="1"/>
</dbReference>
<dbReference type="Pfam" id="PF00074">
    <property type="entry name" value="RnaseA"/>
    <property type="match status" value="1"/>
</dbReference>
<dbReference type="PRINTS" id="PR00794">
    <property type="entry name" value="RIBONUCLEASE"/>
</dbReference>
<dbReference type="SMART" id="SM00092">
    <property type="entry name" value="RNAse_Pc"/>
    <property type="match status" value="1"/>
</dbReference>
<dbReference type="SUPFAM" id="SSF54076">
    <property type="entry name" value="RNase A-like"/>
    <property type="match status" value="1"/>
</dbReference>
<dbReference type="PROSITE" id="PS00127">
    <property type="entry name" value="RNASE_PANCREATIC"/>
    <property type="match status" value="1"/>
</dbReference>
<proteinExistence type="inferred from homology"/>
<protein>
    <recommendedName>
        <fullName>Angiogenin</fullName>
        <ecNumber evidence="1">3.1.27.-</ecNumber>
    </recommendedName>
    <alternativeName>
        <fullName>Ribonuclease 5</fullName>
        <shortName>RNase 5</shortName>
    </alternativeName>
</protein>
<organism>
    <name type="scientific">Pan troglodytes</name>
    <name type="common">Chimpanzee</name>
    <dbReference type="NCBI Taxonomy" id="9598"/>
    <lineage>
        <taxon>Eukaryota</taxon>
        <taxon>Metazoa</taxon>
        <taxon>Chordata</taxon>
        <taxon>Craniata</taxon>
        <taxon>Vertebrata</taxon>
        <taxon>Euteleostomi</taxon>
        <taxon>Mammalia</taxon>
        <taxon>Eutheria</taxon>
        <taxon>Euarchontoglires</taxon>
        <taxon>Primates</taxon>
        <taxon>Haplorrhini</taxon>
        <taxon>Catarrhini</taxon>
        <taxon>Hominidae</taxon>
        <taxon>Pan</taxon>
    </lineage>
</organism>
<keyword id="KW-0037">Angiogenesis</keyword>
<keyword id="KW-0963">Cytoplasm</keyword>
<keyword id="KW-0217">Developmental protein</keyword>
<keyword id="KW-0221">Differentiation</keyword>
<keyword id="KW-1015">Disulfide bond</keyword>
<keyword id="KW-0238">DNA-binding</keyword>
<keyword id="KW-0255">Endonuclease</keyword>
<keyword id="KW-0378">Hydrolase</keyword>
<keyword id="KW-0540">Nuclease</keyword>
<keyword id="KW-0539">Nucleus</keyword>
<keyword id="KW-0652">Protein synthesis inhibitor</keyword>
<keyword id="KW-0873">Pyrrolidone carboxylic acid</keyword>
<keyword id="KW-1185">Reference proteome</keyword>
<keyword id="KW-0964">Secreted</keyword>
<keyword id="KW-0732">Signal</keyword>
<keyword id="KW-0346">Stress response</keyword>
<feature type="signal peptide" evidence="1">
    <location>
        <begin position="1"/>
        <end position="24"/>
    </location>
</feature>
<feature type="chain" id="PRO_0000030846" description="Angiogenin">
    <location>
        <begin position="25"/>
        <end position="147"/>
    </location>
</feature>
<feature type="short sequence motif" description="Nucleolar localization signal" evidence="1">
    <location>
        <begin position="55"/>
        <end position="59"/>
    </location>
</feature>
<feature type="active site" description="Proton acceptor" evidence="1">
    <location>
        <position position="37"/>
    </location>
</feature>
<feature type="active site" description="Proton donor" evidence="1">
    <location>
        <position position="138"/>
    </location>
</feature>
<feature type="binding site" evidence="1">
    <location>
        <position position="45"/>
    </location>
    <ligand>
        <name>tRNA</name>
        <dbReference type="ChEBI" id="CHEBI:17843"/>
    </ligand>
</feature>
<feature type="binding site" evidence="1">
    <location>
        <position position="46"/>
    </location>
    <ligand>
        <name>tRNA</name>
        <dbReference type="ChEBI" id="CHEBI:17843"/>
    </ligand>
</feature>
<feature type="binding site" evidence="1">
    <location>
        <position position="105"/>
    </location>
    <ligand>
        <name>tRNA</name>
        <dbReference type="ChEBI" id="CHEBI:17843"/>
    </ligand>
</feature>
<feature type="binding site" evidence="1">
    <location>
        <position position="127"/>
    </location>
    <ligand>
        <name>tRNA</name>
        <dbReference type="ChEBI" id="CHEBI:17843"/>
    </ligand>
</feature>
<feature type="modified residue" description="Pyrrolidone carboxylic acid" evidence="1">
    <location>
        <position position="25"/>
    </location>
</feature>
<feature type="disulfide bond" evidence="1">
    <location>
        <begin position="50"/>
        <end position="105"/>
    </location>
</feature>
<feature type="disulfide bond" evidence="1">
    <location>
        <begin position="63"/>
        <end position="116"/>
    </location>
</feature>
<feature type="disulfide bond" evidence="1">
    <location>
        <begin position="81"/>
        <end position="131"/>
    </location>
</feature>
<comment type="function">
    <text evidence="1 2">Secreted ribonuclease that can either promote or restrict cell proliferation of target cells, depending on the context. Endocytosed in target cells via its receptor PLXNB2 and translocates to the cytoplasm or nucleus. Under stress conditions, localizes to the cytoplasm and promotes the assembly of stress granules (SGs): specifically cleaves a subset of tRNAs within anticodon loops to produce tRNA-derived stress-induced fragments (tiRNAs), resulting in translation repression and inhibition of cell proliferation (By similarity). tiRNas also prevent formation of apoptosome, thereby promoting cell survival (By similarity). Preferentially cleaves RNAs between a pyrimidine and an adenosine residue, suggesting that it cleaves the anticodon loop of tRNA(Ala) (32-UUAGCAU-38) after positions 33 and 36. Cleaves a subset of tRNAs, including tRNA(Ala), tRNA(Glu), tRNA(Gly), tRNA(Lys), tRNA(Val), tRNA(His), tRNA(Asp) and tRNA(Sec). Under growth conditions and in differentiated cells, translocates to the nucleus and stimulates ribosomal RNA (rRNA) transcription, including that containing the initiation site sequences of 45S rRNA, thereby promoting cell growth and proliferation. Angiogenin induces vascularization of normal and malignant tissues via its ability to promote rRNA transcription. Involved in hematopoietic stem and progenitor cell (HSPC) growth and survival by promoting rRNA transcription in growth conditions and inhibiting translation in response to stress, respectively. Mediates the crosstalk between myeloid and intestinal epithelial cells to protect the intestinal epithelial barrier integrity: secreted by myeloid cells and promotes intestinal epithelial cells proliferation and survival (By similarity). Also mediates osteoclast-endothelial cell crosstalk in growing bone: produced by osteoclasts and protects the neighboring vascular cells against senescence by promoting rRNA transcription (By similarity).</text>
</comment>
<comment type="activity regulation">
    <text evidence="1">Has weak tRNA ribonuclease activity by itself due to partial autoinhibition by its C-terminus, which folds into a short alpha-helix that partially occludes the substrate-binding site. In absence of stress, the ribonuclease activity is inhibited by RNH1 in the cytoplasm. In response to stress, dissociates from RNH1 in the cytoplasm and associates with cytoplasmic ribosomes with vacant A-sites: ribosomes directly activate the tRNA ribonuclease activity of ANG by refolding the C-terminal alpha-helix. In response to stress, the angiogenic activity of ANG is inhibited by RNH1 in the nucleus.</text>
</comment>
<comment type="subunit">
    <text evidence="1">Homodimer. Interacts with RNH1; inhibiting ANG ribonuclease activity. Interacts with PCNA.</text>
</comment>
<comment type="subcellular location">
    <subcellularLocation>
        <location evidence="1">Secreted</location>
    </subcellularLocation>
    <subcellularLocation>
        <location evidence="1">Nucleus</location>
    </subcellularLocation>
    <subcellularLocation>
        <location evidence="1">Nucleus</location>
        <location evidence="1">Nucleolus</location>
    </subcellularLocation>
    <subcellularLocation>
        <location evidence="1">Cytoplasm</location>
        <location evidence="1">Stress granule</location>
    </subcellularLocation>
    <text evidence="1">The secreted protein is rapidly endocytosed by target cells following interaction with PLXNB2 receptor and translocated to the cytoplasm and nucleus. In the nucleus, accumulates in the nucleolus and binds to DNA.</text>
</comment>
<comment type="similarity">
    <text evidence="3">Belongs to the pancreatic ribonuclease family.</text>
</comment>
<comment type="sequence caution" evidence="3">
    <conflict type="erroneous initiation">
        <sequence resource="EMBL-CDS" id="BAB55868"/>
    </conflict>
    <text>Truncated N-terminus.</text>
</comment>
<comment type="sequence caution" evidence="3">
    <conflict type="erroneous initiation">
        <sequence resource="EMBL-CDS" id="BAB55869"/>
    </conflict>
    <text>Truncated N-terminus.</text>
</comment>
<name>ANGI_PANTR</name>
<evidence type="ECO:0000250" key="1">
    <source>
        <dbReference type="UniProtKB" id="P03950"/>
    </source>
</evidence>
<evidence type="ECO:0000250" key="2">
    <source>
        <dbReference type="UniProtKB" id="P21570"/>
    </source>
</evidence>
<evidence type="ECO:0000305" key="3"/>
<gene>
    <name type="primary">ANG</name>
    <name type="synonym">RNASE5</name>
</gene>
<accession>Q8WME8</accession>
<accession>Q95J16</accession>
<reference key="1">
    <citation type="journal article" date="2002" name="Mol. Biol. Evol.">
        <title>Diversifying selection of the tumor-growth promoter angiogenin in primate evolution.</title>
        <authorList>
            <person name="Zhang J."/>
            <person name="Rosenberg H.F."/>
        </authorList>
    </citation>
    <scope>NUCLEOTIDE SEQUENCE [GENOMIC DNA]</scope>
</reference>
<reference key="2">
    <citation type="journal article" date="2001" name="Genes Genet. Syst.">
        <title>Comparison of DNA and protein polymorphisms between humans and chimpanzees.</title>
        <authorList>
            <person name="Satta Y."/>
        </authorList>
    </citation>
    <scope>NUCLEOTIDE SEQUENCE [GENOMIC DNA] OF 3-147</scope>
    <source>
        <strain>Isolate 504</strain>
        <strain>Isolate 505</strain>
    </source>
</reference>